<name>DXR_STUS1</name>
<sequence>MSRPLQITILGATGSIGLSTLDVVARHPDRYDVFALTGFSRLAELRALCLKHRPRYAVVSDQAQARILQDQLHADGVSTRVLDGEGGLSEVAAHPEVDVVMAAIVGAAGLKPTLAAVQSGKRVLLANKEALVMSGALFMQALRDSGAVLLPIDSEHNAIFQCLPTDYSQGLGTVGVRRILLTASGGPFREMAPDLLSDVTPEQACAHPNWSMGRKISVDSASMMNKGLELIEACWLFDARPHQVEVVIHPQSVIHSMVDYVDGSVLAQLGNPDMRTPIAHALAWPERIESGVSALDLLRVGRLDFQAPDDRRFPCLRLARTAAEVGGTAPAMLNAANEVAVDAFLNRRIRFTEIASIIDDVLNHEASVPTVCLEDVLAADRRARDVAGQWLYRNGR</sequence>
<comment type="function">
    <text evidence="1">Catalyzes the NADPH-dependent rearrangement and reduction of 1-deoxy-D-xylulose-5-phosphate (DXP) to 2-C-methyl-D-erythritol 4-phosphate (MEP).</text>
</comment>
<comment type="catalytic activity">
    <reaction evidence="1">
        <text>2-C-methyl-D-erythritol 4-phosphate + NADP(+) = 1-deoxy-D-xylulose 5-phosphate + NADPH + H(+)</text>
        <dbReference type="Rhea" id="RHEA:13717"/>
        <dbReference type="ChEBI" id="CHEBI:15378"/>
        <dbReference type="ChEBI" id="CHEBI:57783"/>
        <dbReference type="ChEBI" id="CHEBI:57792"/>
        <dbReference type="ChEBI" id="CHEBI:58262"/>
        <dbReference type="ChEBI" id="CHEBI:58349"/>
        <dbReference type="EC" id="1.1.1.267"/>
    </reaction>
    <physiologicalReaction direction="right-to-left" evidence="1">
        <dbReference type="Rhea" id="RHEA:13719"/>
    </physiologicalReaction>
</comment>
<comment type="cofactor">
    <cofactor evidence="1">
        <name>Mg(2+)</name>
        <dbReference type="ChEBI" id="CHEBI:18420"/>
    </cofactor>
    <cofactor evidence="1">
        <name>Mn(2+)</name>
        <dbReference type="ChEBI" id="CHEBI:29035"/>
    </cofactor>
</comment>
<comment type="pathway">
    <text evidence="1">Isoprenoid biosynthesis; isopentenyl diphosphate biosynthesis via DXP pathway; isopentenyl diphosphate from 1-deoxy-D-xylulose 5-phosphate: step 1/6.</text>
</comment>
<comment type="similarity">
    <text evidence="1">Belongs to the DXR family.</text>
</comment>
<keyword id="KW-0414">Isoprene biosynthesis</keyword>
<keyword id="KW-0464">Manganese</keyword>
<keyword id="KW-0479">Metal-binding</keyword>
<keyword id="KW-0521">NADP</keyword>
<keyword id="KW-0560">Oxidoreductase</keyword>
<keyword id="KW-1185">Reference proteome</keyword>
<organism>
    <name type="scientific">Stutzerimonas stutzeri (strain A1501)</name>
    <name type="common">Pseudomonas stutzeri</name>
    <dbReference type="NCBI Taxonomy" id="379731"/>
    <lineage>
        <taxon>Bacteria</taxon>
        <taxon>Pseudomonadati</taxon>
        <taxon>Pseudomonadota</taxon>
        <taxon>Gammaproteobacteria</taxon>
        <taxon>Pseudomonadales</taxon>
        <taxon>Pseudomonadaceae</taxon>
        <taxon>Stutzerimonas</taxon>
    </lineage>
</organism>
<proteinExistence type="inferred from homology"/>
<reference key="1">
    <citation type="journal article" date="2008" name="Proc. Natl. Acad. Sci. U.S.A.">
        <title>Nitrogen fixation island and rhizosphere competence traits in the genome of root-associated Pseudomonas stutzeri A1501.</title>
        <authorList>
            <person name="Yan Y."/>
            <person name="Yang J."/>
            <person name="Dou Y."/>
            <person name="Chen M."/>
            <person name="Ping S."/>
            <person name="Peng J."/>
            <person name="Lu W."/>
            <person name="Zhang W."/>
            <person name="Yao Z."/>
            <person name="Li H."/>
            <person name="Liu W."/>
            <person name="He S."/>
            <person name="Geng L."/>
            <person name="Zhang X."/>
            <person name="Yang F."/>
            <person name="Yu H."/>
            <person name="Zhan Y."/>
            <person name="Li D."/>
            <person name="Lin Z."/>
            <person name="Wang Y."/>
            <person name="Elmerich C."/>
            <person name="Lin M."/>
            <person name="Jin Q."/>
        </authorList>
    </citation>
    <scope>NUCLEOTIDE SEQUENCE [LARGE SCALE GENOMIC DNA]</scope>
    <source>
        <strain>A1501</strain>
    </source>
</reference>
<gene>
    <name evidence="1" type="primary">dxr</name>
    <name type="ordered locus">PST_1543</name>
</gene>
<dbReference type="EC" id="1.1.1.267" evidence="1"/>
<dbReference type="EMBL" id="CP000304">
    <property type="protein sequence ID" value="ABP79228.1"/>
    <property type="molecule type" value="Genomic_DNA"/>
</dbReference>
<dbReference type="RefSeq" id="WP_011912706.1">
    <property type="nucleotide sequence ID" value="NC_009434.1"/>
</dbReference>
<dbReference type="SMR" id="A4VJS7"/>
<dbReference type="KEGG" id="psa:PST_1543"/>
<dbReference type="eggNOG" id="COG0743">
    <property type="taxonomic scope" value="Bacteria"/>
</dbReference>
<dbReference type="HOGENOM" id="CLU_035714_4_0_6"/>
<dbReference type="UniPathway" id="UPA00056">
    <property type="reaction ID" value="UER00092"/>
</dbReference>
<dbReference type="Proteomes" id="UP000000233">
    <property type="component" value="Chromosome"/>
</dbReference>
<dbReference type="GO" id="GO:0030604">
    <property type="term" value="F:1-deoxy-D-xylulose-5-phosphate reductoisomerase activity"/>
    <property type="evidence" value="ECO:0007669"/>
    <property type="project" value="UniProtKB-UniRule"/>
</dbReference>
<dbReference type="GO" id="GO:0030145">
    <property type="term" value="F:manganese ion binding"/>
    <property type="evidence" value="ECO:0007669"/>
    <property type="project" value="TreeGrafter"/>
</dbReference>
<dbReference type="GO" id="GO:0070402">
    <property type="term" value="F:NADPH binding"/>
    <property type="evidence" value="ECO:0007669"/>
    <property type="project" value="InterPro"/>
</dbReference>
<dbReference type="GO" id="GO:0051484">
    <property type="term" value="P:isopentenyl diphosphate biosynthetic process, methylerythritol 4-phosphate pathway involved in terpenoid biosynthetic process"/>
    <property type="evidence" value="ECO:0007669"/>
    <property type="project" value="TreeGrafter"/>
</dbReference>
<dbReference type="FunFam" id="1.10.1740.10:FF:000004">
    <property type="entry name" value="1-deoxy-D-xylulose 5-phosphate reductoisomerase"/>
    <property type="match status" value="1"/>
</dbReference>
<dbReference type="FunFam" id="3.40.50.720:FF:000045">
    <property type="entry name" value="1-deoxy-D-xylulose 5-phosphate reductoisomerase"/>
    <property type="match status" value="1"/>
</dbReference>
<dbReference type="Gene3D" id="1.10.1740.10">
    <property type="match status" value="1"/>
</dbReference>
<dbReference type="Gene3D" id="3.40.50.720">
    <property type="entry name" value="NAD(P)-binding Rossmann-like Domain"/>
    <property type="match status" value="1"/>
</dbReference>
<dbReference type="HAMAP" id="MF_00183">
    <property type="entry name" value="DXP_reductoisom"/>
    <property type="match status" value="1"/>
</dbReference>
<dbReference type="InterPro" id="IPR003821">
    <property type="entry name" value="DXP_reductoisomerase"/>
</dbReference>
<dbReference type="InterPro" id="IPR013644">
    <property type="entry name" value="DXP_reductoisomerase_C"/>
</dbReference>
<dbReference type="InterPro" id="IPR013512">
    <property type="entry name" value="DXP_reductoisomerase_N"/>
</dbReference>
<dbReference type="InterPro" id="IPR026877">
    <property type="entry name" value="DXPR_C"/>
</dbReference>
<dbReference type="InterPro" id="IPR036169">
    <property type="entry name" value="DXPR_C_sf"/>
</dbReference>
<dbReference type="InterPro" id="IPR036291">
    <property type="entry name" value="NAD(P)-bd_dom_sf"/>
</dbReference>
<dbReference type="NCBIfam" id="TIGR00243">
    <property type="entry name" value="Dxr"/>
    <property type="match status" value="1"/>
</dbReference>
<dbReference type="NCBIfam" id="NF003938">
    <property type="entry name" value="PRK05447.1-1"/>
    <property type="match status" value="1"/>
</dbReference>
<dbReference type="NCBIfam" id="NF009114">
    <property type="entry name" value="PRK12464.1"/>
    <property type="match status" value="1"/>
</dbReference>
<dbReference type="PANTHER" id="PTHR30525">
    <property type="entry name" value="1-DEOXY-D-XYLULOSE 5-PHOSPHATE REDUCTOISOMERASE"/>
    <property type="match status" value="1"/>
</dbReference>
<dbReference type="PANTHER" id="PTHR30525:SF0">
    <property type="entry name" value="1-DEOXY-D-XYLULOSE 5-PHOSPHATE REDUCTOISOMERASE, CHLOROPLASTIC"/>
    <property type="match status" value="1"/>
</dbReference>
<dbReference type="Pfam" id="PF08436">
    <property type="entry name" value="DXP_redisom_C"/>
    <property type="match status" value="1"/>
</dbReference>
<dbReference type="Pfam" id="PF02670">
    <property type="entry name" value="DXP_reductoisom"/>
    <property type="match status" value="1"/>
</dbReference>
<dbReference type="Pfam" id="PF13288">
    <property type="entry name" value="DXPR_C"/>
    <property type="match status" value="1"/>
</dbReference>
<dbReference type="PIRSF" id="PIRSF006205">
    <property type="entry name" value="Dxp_reductismrs"/>
    <property type="match status" value="1"/>
</dbReference>
<dbReference type="SUPFAM" id="SSF69055">
    <property type="entry name" value="1-deoxy-D-xylulose-5-phosphate reductoisomerase, C-terminal domain"/>
    <property type="match status" value="1"/>
</dbReference>
<dbReference type="SUPFAM" id="SSF55347">
    <property type="entry name" value="Glyceraldehyde-3-phosphate dehydrogenase-like, C-terminal domain"/>
    <property type="match status" value="1"/>
</dbReference>
<dbReference type="SUPFAM" id="SSF51735">
    <property type="entry name" value="NAD(P)-binding Rossmann-fold domains"/>
    <property type="match status" value="1"/>
</dbReference>
<protein>
    <recommendedName>
        <fullName evidence="1">1-deoxy-D-xylulose 5-phosphate reductoisomerase</fullName>
        <shortName evidence="1">DXP reductoisomerase</shortName>
        <ecNumber evidence="1">1.1.1.267</ecNumber>
    </recommendedName>
    <alternativeName>
        <fullName evidence="1">1-deoxyxylulose-5-phosphate reductoisomerase</fullName>
    </alternativeName>
    <alternativeName>
        <fullName evidence="1">2-C-methyl-D-erythritol 4-phosphate synthase</fullName>
    </alternativeName>
</protein>
<evidence type="ECO:0000255" key="1">
    <source>
        <dbReference type="HAMAP-Rule" id="MF_00183"/>
    </source>
</evidence>
<accession>A4VJS7</accession>
<feature type="chain" id="PRO_1000020294" description="1-deoxy-D-xylulose 5-phosphate reductoisomerase">
    <location>
        <begin position="1"/>
        <end position="396"/>
    </location>
</feature>
<feature type="binding site" evidence="1">
    <location>
        <position position="13"/>
    </location>
    <ligand>
        <name>NADPH</name>
        <dbReference type="ChEBI" id="CHEBI:57783"/>
    </ligand>
</feature>
<feature type="binding site" evidence="1">
    <location>
        <position position="14"/>
    </location>
    <ligand>
        <name>NADPH</name>
        <dbReference type="ChEBI" id="CHEBI:57783"/>
    </ligand>
</feature>
<feature type="binding site" evidence="1">
    <location>
        <position position="15"/>
    </location>
    <ligand>
        <name>NADPH</name>
        <dbReference type="ChEBI" id="CHEBI:57783"/>
    </ligand>
</feature>
<feature type="binding site" evidence="1">
    <location>
        <position position="16"/>
    </location>
    <ligand>
        <name>NADPH</name>
        <dbReference type="ChEBI" id="CHEBI:57783"/>
    </ligand>
</feature>
<feature type="binding site" evidence="1">
    <location>
        <position position="127"/>
    </location>
    <ligand>
        <name>NADPH</name>
        <dbReference type="ChEBI" id="CHEBI:57783"/>
    </ligand>
</feature>
<feature type="binding site" evidence="1">
    <location>
        <position position="128"/>
    </location>
    <ligand>
        <name>1-deoxy-D-xylulose 5-phosphate</name>
        <dbReference type="ChEBI" id="CHEBI:57792"/>
    </ligand>
</feature>
<feature type="binding site" evidence="1">
    <location>
        <position position="129"/>
    </location>
    <ligand>
        <name>NADPH</name>
        <dbReference type="ChEBI" id="CHEBI:57783"/>
    </ligand>
</feature>
<feature type="binding site" evidence="1">
    <location>
        <position position="153"/>
    </location>
    <ligand>
        <name>Mn(2+)</name>
        <dbReference type="ChEBI" id="CHEBI:29035"/>
    </ligand>
</feature>
<feature type="binding site" evidence="1">
    <location>
        <position position="154"/>
    </location>
    <ligand>
        <name>1-deoxy-D-xylulose 5-phosphate</name>
        <dbReference type="ChEBI" id="CHEBI:57792"/>
    </ligand>
</feature>
<feature type="binding site" evidence="1">
    <location>
        <position position="155"/>
    </location>
    <ligand>
        <name>1-deoxy-D-xylulose 5-phosphate</name>
        <dbReference type="ChEBI" id="CHEBI:57792"/>
    </ligand>
</feature>
<feature type="binding site" evidence="1">
    <location>
        <position position="155"/>
    </location>
    <ligand>
        <name>Mn(2+)</name>
        <dbReference type="ChEBI" id="CHEBI:29035"/>
    </ligand>
</feature>
<feature type="binding site" evidence="1">
    <location>
        <position position="184"/>
    </location>
    <ligand>
        <name>1-deoxy-D-xylulose 5-phosphate</name>
        <dbReference type="ChEBI" id="CHEBI:57792"/>
    </ligand>
</feature>
<feature type="binding site" evidence="1">
    <location>
        <position position="207"/>
    </location>
    <ligand>
        <name>1-deoxy-D-xylulose 5-phosphate</name>
        <dbReference type="ChEBI" id="CHEBI:57792"/>
    </ligand>
</feature>
<feature type="binding site" evidence="1">
    <location>
        <position position="213"/>
    </location>
    <ligand>
        <name>NADPH</name>
        <dbReference type="ChEBI" id="CHEBI:57783"/>
    </ligand>
</feature>
<feature type="binding site" evidence="1">
    <location>
        <position position="220"/>
    </location>
    <ligand>
        <name>1-deoxy-D-xylulose 5-phosphate</name>
        <dbReference type="ChEBI" id="CHEBI:57792"/>
    </ligand>
</feature>
<feature type="binding site" evidence="1">
    <location>
        <position position="225"/>
    </location>
    <ligand>
        <name>1-deoxy-D-xylulose 5-phosphate</name>
        <dbReference type="ChEBI" id="CHEBI:57792"/>
    </ligand>
</feature>
<feature type="binding site" evidence="1">
    <location>
        <position position="226"/>
    </location>
    <ligand>
        <name>1-deoxy-D-xylulose 5-phosphate</name>
        <dbReference type="ChEBI" id="CHEBI:57792"/>
    </ligand>
</feature>
<feature type="binding site" evidence="1">
    <location>
        <position position="229"/>
    </location>
    <ligand>
        <name>1-deoxy-D-xylulose 5-phosphate</name>
        <dbReference type="ChEBI" id="CHEBI:57792"/>
    </ligand>
</feature>
<feature type="binding site" evidence="1">
    <location>
        <position position="229"/>
    </location>
    <ligand>
        <name>Mn(2+)</name>
        <dbReference type="ChEBI" id="CHEBI:29035"/>
    </ligand>
</feature>